<accession>Q8H443</accession>
<accession>A0A0P0X4I8</accession>
<accession>B9FWB1</accession>
<name>AP23_ORYSJ</name>
<organism>
    <name type="scientific">Oryza sativa subsp. japonica</name>
    <name type="common">Rice</name>
    <dbReference type="NCBI Taxonomy" id="39947"/>
    <lineage>
        <taxon>Eukaryota</taxon>
        <taxon>Viridiplantae</taxon>
        <taxon>Streptophyta</taxon>
        <taxon>Embryophyta</taxon>
        <taxon>Tracheophyta</taxon>
        <taxon>Spermatophyta</taxon>
        <taxon>Magnoliopsida</taxon>
        <taxon>Liliopsida</taxon>
        <taxon>Poales</taxon>
        <taxon>Poaceae</taxon>
        <taxon>BOP clade</taxon>
        <taxon>Oryzoideae</taxon>
        <taxon>Oryzeae</taxon>
        <taxon>Oryzinae</taxon>
        <taxon>Oryza</taxon>
        <taxon>Oryza sativa</taxon>
    </lineage>
</organism>
<reference key="1">
    <citation type="journal article" date="2007" name="Plant J.">
        <title>The rice heterochronic gene SUPERNUMERARY BRACT regulates the transition from spikelet meristem to floral meristem.</title>
        <authorList>
            <person name="Lee D.-Y."/>
            <person name="Lee J."/>
            <person name="Moon S."/>
            <person name="Park S.Y."/>
            <person name="An G."/>
        </authorList>
    </citation>
    <scope>NUCLEOTIDE SEQUENCE [MRNA]</scope>
    <scope>FUNCTION</scope>
    <scope>DISRUPTION PHENOTYPE</scope>
    <scope>SUBCELLULAR LOCATION</scope>
    <scope>TISSUE SPECIFICITY</scope>
    <scope>DEVELOPMENTAL STAGE</scope>
    <source>
        <strain>cv. Dongjin</strain>
        <tissue>Flower</tissue>
    </source>
</reference>
<reference key="2">
    <citation type="journal article" date="2005" name="Nature">
        <title>The map-based sequence of the rice genome.</title>
        <authorList>
            <consortium name="International rice genome sequencing project (IRGSP)"/>
        </authorList>
    </citation>
    <scope>NUCLEOTIDE SEQUENCE [LARGE SCALE GENOMIC DNA]</scope>
    <source>
        <strain>cv. Nipponbare</strain>
    </source>
</reference>
<reference key="3">
    <citation type="journal article" date="2008" name="Nucleic Acids Res.">
        <title>The rice annotation project database (RAP-DB): 2008 update.</title>
        <authorList>
            <consortium name="The rice annotation project (RAP)"/>
        </authorList>
    </citation>
    <scope>GENOME REANNOTATION</scope>
    <source>
        <strain>cv. Nipponbare</strain>
    </source>
</reference>
<reference key="4">
    <citation type="journal article" date="2013" name="Rice">
        <title>Improvement of the Oryza sativa Nipponbare reference genome using next generation sequence and optical map data.</title>
        <authorList>
            <person name="Kawahara Y."/>
            <person name="de la Bastide M."/>
            <person name="Hamilton J.P."/>
            <person name="Kanamori H."/>
            <person name="McCombie W.R."/>
            <person name="Ouyang S."/>
            <person name="Schwartz D.C."/>
            <person name="Tanaka T."/>
            <person name="Wu J."/>
            <person name="Zhou S."/>
            <person name="Childs K.L."/>
            <person name="Davidson R.M."/>
            <person name="Lin H."/>
            <person name="Quesada-Ocampo L."/>
            <person name="Vaillancourt B."/>
            <person name="Sakai H."/>
            <person name="Lee S.S."/>
            <person name="Kim J."/>
            <person name="Numa H."/>
            <person name="Itoh T."/>
            <person name="Buell C.R."/>
            <person name="Matsumoto T."/>
        </authorList>
    </citation>
    <scope>GENOME REANNOTATION</scope>
    <source>
        <strain>cv. Nipponbare</strain>
    </source>
</reference>
<reference key="5">
    <citation type="journal article" date="2005" name="PLoS Biol.">
        <title>The genomes of Oryza sativa: a history of duplications.</title>
        <authorList>
            <person name="Yu J."/>
            <person name="Wang J."/>
            <person name="Lin W."/>
            <person name="Li S."/>
            <person name="Li H."/>
            <person name="Zhou J."/>
            <person name="Ni P."/>
            <person name="Dong W."/>
            <person name="Hu S."/>
            <person name="Zeng C."/>
            <person name="Zhang J."/>
            <person name="Zhang Y."/>
            <person name="Li R."/>
            <person name="Xu Z."/>
            <person name="Li S."/>
            <person name="Li X."/>
            <person name="Zheng H."/>
            <person name="Cong L."/>
            <person name="Lin L."/>
            <person name="Yin J."/>
            <person name="Geng J."/>
            <person name="Li G."/>
            <person name="Shi J."/>
            <person name="Liu J."/>
            <person name="Lv H."/>
            <person name="Li J."/>
            <person name="Wang J."/>
            <person name="Deng Y."/>
            <person name="Ran L."/>
            <person name="Shi X."/>
            <person name="Wang X."/>
            <person name="Wu Q."/>
            <person name="Li C."/>
            <person name="Ren X."/>
            <person name="Wang J."/>
            <person name="Wang X."/>
            <person name="Li D."/>
            <person name="Liu D."/>
            <person name="Zhang X."/>
            <person name="Ji Z."/>
            <person name="Zhao W."/>
            <person name="Sun Y."/>
            <person name="Zhang Z."/>
            <person name="Bao J."/>
            <person name="Han Y."/>
            <person name="Dong L."/>
            <person name="Ji J."/>
            <person name="Chen P."/>
            <person name="Wu S."/>
            <person name="Liu J."/>
            <person name="Xiao Y."/>
            <person name="Bu D."/>
            <person name="Tan J."/>
            <person name="Yang L."/>
            <person name="Ye C."/>
            <person name="Zhang J."/>
            <person name="Xu J."/>
            <person name="Zhou Y."/>
            <person name="Yu Y."/>
            <person name="Zhang B."/>
            <person name="Zhuang S."/>
            <person name="Wei H."/>
            <person name="Liu B."/>
            <person name="Lei M."/>
            <person name="Yu H."/>
            <person name="Li Y."/>
            <person name="Xu H."/>
            <person name="Wei S."/>
            <person name="He X."/>
            <person name="Fang L."/>
            <person name="Zhang Z."/>
            <person name="Zhang Y."/>
            <person name="Huang X."/>
            <person name="Su Z."/>
            <person name="Tong W."/>
            <person name="Li J."/>
            <person name="Tong Z."/>
            <person name="Li S."/>
            <person name="Ye J."/>
            <person name="Wang L."/>
            <person name="Fang L."/>
            <person name="Lei T."/>
            <person name="Chen C.-S."/>
            <person name="Chen H.-C."/>
            <person name="Xu Z."/>
            <person name="Li H."/>
            <person name="Huang H."/>
            <person name="Zhang F."/>
            <person name="Xu H."/>
            <person name="Li N."/>
            <person name="Zhao C."/>
            <person name="Li S."/>
            <person name="Dong L."/>
            <person name="Huang Y."/>
            <person name="Li L."/>
            <person name="Xi Y."/>
            <person name="Qi Q."/>
            <person name="Li W."/>
            <person name="Zhang B."/>
            <person name="Hu W."/>
            <person name="Zhang Y."/>
            <person name="Tian X."/>
            <person name="Jiao Y."/>
            <person name="Liang X."/>
            <person name="Jin J."/>
            <person name="Gao L."/>
            <person name="Zheng W."/>
            <person name="Hao B."/>
            <person name="Liu S.-M."/>
            <person name="Wang W."/>
            <person name="Yuan L."/>
            <person name="Cao M."/>
            <person name="McDermott J."/>
            <person name="Samudrala R."/>
            <person name="Wang J."/>
            <person name="Wong G.K.-S."/>
            <person name="Yang H."/>
        </authorList>
    </citation>
    <scope>NUCLEOTIDE SEQUENCE [LARGE SCALE GENOMIC DNA]</scope>
    <source>
        <strain>cv. Nipponbare</strain>
    </source>
</reference>
<reference key="6">
    <citation type="journal article" date="2009" name="BMC Plant Biol.">
        <title>Over-expression of miR172 causes loss of spikelet determinacy and floral organ abnormalities in rice (Oryza sativa).</title>
        <authorList>
            <person name="Zhu Q.-H."/>
            <person name="Upadhyaya N.M."/>
            <person name="Gubler F."/>
            <person name="Helliwell C.A."/>
        </authorList>
    </citation>
    <scope>TISSUE SPECIFICITY</scope>
    <scope>REPRESSION BY MIR172</scope>
</reference>
<reference key="7">
    <citation type="journal article" date="2012" name="Plant J.">
        <title>Two AP2 family genes, SUPERNUMERARY BRACT (SNB) and OsINDETERMINATE SPIKELET 1 (OsIDS1), synergistically control inflorescence architecture and floral meristem establishment in rice.</title>
        <authorList>
            <person name="Lee D.Y."/>
            <person name="An G."/>
        </authorList>
    </citation>
    <scope>FUNCTION</scope>
    <scope>DISRUPTION PHENOTYPE</scope>
    <scope>REPRESSION BY MIR172</scope>
    <scope>TISSUE SPECIFICITY</scope>
    <scope>DEVELOPMENTAL STAGE</scope>
</reference>
<reference key="8">
    <citation type="journal article" date="2015" name="Proc. Natl. Acad. Sci. U.S.A.">
        <title>Coordinated regulation of vegetative and reproductive branching in rice.</title>
        <authorList>
            <person name="Wang L."/>
            <person name="Sun S."/>
            <person name="Jin J."/>
            <person name="Fu D."/>
            <person name="Yang X."/>
            <person name="Weng X."/>
            <person name="Xu C."/>
            <person name="Li X."/>
            <person name="Xiao J."/>
            <person name="Zhang Q."/>
        </authorList>
    </citation>
    <scope>FUNCTION</scope>
    <scope>REPRESSION BY MIR172</scope>
    <scope>INTERACTION WITH TPR2/ASP1</scope>
</reference>
<reference key="9">
    <citation type="journal article" date="2016" name="Front. Plant Sci.">
        <title>OsMADS1 represses microRNA172 in elongation of palea/lemma development in rice.</title>
        <authorList>
            <person name="Dai Z."/>
            <person name="Wang J."/>
            <person name="Zhu M."/>
            <person name="Miao X."/>
            <person name="Shi Z."/>
        </authorList>
    </citation>
    <scope>FUNCTION</scope>
    <scope>REPRESSION BY MIR172</scope>
    <scope>GENE FAMILY</scope>
    <scope>NOMENCLATURE</scope>
    <source>
        <strain>cv. Zhonghua 11</strain>
    </source>
</reference>
<gene>
    <name evidence="11" type="primary">AP2-3</name>
    <name evidence="10" type="synonym">SNB</name>
    <name evidence="12" type="ordered locus">LOC_Os07g13170</name>
    <name evidence="16" type="ordered locus">Os07g0235800</name>
    <name evidence="18" type="ORF">OsJ_23635</name>
    <name evidence="17" type="ORF">OSNPB_070235800</name>
    <name evidence="15" type="ORF">P0407H12.124</name>
</gene>
<comment type="function">
    <text evidence="1 5 7 9 13">Probable transcription factor (By similarity). Involved in spikelet transition (Probable). Together with IDS1, controls synergistically inflorescence architecture and floral meristem establishment via the regulation of spatio-temporal expression of B- and E-function floral organ identity genes in the lodicules and of spikelet meristem genes (PubMed:22003982). Prevents lemma and palea elongation as well as grain growth (PubMed:28066457). Regulates the transition from spikelet meristem to floral meristem, spikelet meristem determinancy and the floral organ development (PubMed:17144896).</text>
</comment>
<comment type="subunit">
    <text evidence="1 8">May form homodimer (By similarity). Interacts with TPR2/ASP1 (PubMed:26631749).</text>
</comment>
<comment type="subcellular location">
    <subcellularLocation>
        <location evidence="3 5">Nucleus</location>
    </subcellularLocation>
</comment>
<comment type="tissue specificity">
    <text evidence="5 6 7">Highly expressed in seedlings and developing panicles (PubMed:17144896, PubMed:20017947, PubMed:22003982). Mostly expressed in newly emerging spikelet meristems and, at low levels, in shoots, roots, panicles, mature spikelets and sheaths (PubMed:17144896).</text>
</comment>
<comment type="developmental stage">
    <text evidence="5 7">First detected in the boundary region of the shoot apical meristem (SAM) and the surrounding sheath. Expressed at low levels in vegetative organs, mostly in the sheaths. In inflorescence tissues, observed in the branch meristem and spikelet meristem regions, as well as in their vasculature and surrounding sheath (PubMed:17144896). Accumulates in incipient rudimentary- and empty-glume primordia (PubMed:22003982). Highly abundant in young developing panicles, but becomes later present at low levels in developing panicles and seeds. Found primarily in the boundary region of glume primordia (PubMed:17144896).</text>
</comment>
<comment type="induction">
    <text evidence="6 7 13 14">Target of miR172 microRNA mediated cleavage, particularly during floral organ development.</text>
</comment>
<comment type="disruption phenotype">
    <text evidence="5 7">Delayed transition from spikelet meristems to floral meristems, resulting in the production of multiple rudimentary glumes in an alternative phyllotaxy. Abnormal development of additional bracts leading to altered floral architecture, inculding lemma/palea-like organs in place of empty glumes and lodicules, altered number of stamens and carpels, and ectopic florets occurring in the axil of the rachilla (PubMed:17144896, PubMed:22003982). The snb osids1 double mutant, lacking both SNB and IDS1, exhibits a decreased number of branches and spikelets within a panicle, as well as a strongly delayed transition to a floral meristem, associated with abnormal spatio-temporal expression of B- and E-function floral organ identity genes in the lodicules and of spikelet meristem genes (PubMed:22003982).</text>
</comment>
<comment type="similarity">
    <text evidence="12">Belongs to the AP2/ERF transcription factor family. AP2 subfamily.</text>
</comment>
<comment type="sequence caution" evidence="12">
    <conflict type="erroneous initiation">
        <sequence resource="EMBL-CDS" id="BAT00742"/>
    </conflict>
    <text>Extended N-terminus.</text>
</comment>
<protein>
    <recommendedName>
        <fullName evidence="11">APETALA2-like protein 3</fullName>
    </recommendedName>
    <alternativeName>
        <fullName evidence="10">Protein SUPERNUMERARY BRACT</fullName>
    </alternativeName>
</protein>
<keyword id="KW-0238">DNA-binding</keyword>
<keyword id="KW-0539">Nucleus</keyword>
<keyword id="KW-1185">Reference proteome</keyword>
<keyword id="KW-0677">Repeat</keyword>
<keyword id="KW-0804">Transcription</keyword>
<keyword id="KW-0805">Transcription regulation</keyword>
<feature type="chain" id="PRO_0000445991" description="APETALA2-like protein 3">
    <location>
        <begin position="1"/>
        <end position="436"/>
    </location>
</feature>
<feature type="DNA-binding region" description="AP2/ERF 1" evidence="3">
    <location>
        <begin position="122"/>
        <end position="178"/>
    </location>
</feature>
<feature type="DNA-binding region" description="AP2/ERF 2" evidence="3">
    <location>
        <begin position="214"/>
        <end position="271"/>
    </location>
</feature>
<feature type="region of interest" description="Disordered" evidence="4">
    <location>
        <begin position="1"/>
        <end position="123"/>
    </location>
</feature>
<feature type="region of interest" description="Disordered" evidence="4">
    <location>
        <begin position="407"/>
        <end position="428"/>
    </location>
</feature>
<feature type="short sequence motif" description="Nuclear localization signal" evidence="2">
    <location>
        <begin position="110"/>
        <end position="119"/>
    </location>
</feature>
<feature type="short sequence motif" description="EAR" evidence="1">
    <location>
        <begin position="295"/>
        <end position="299"/>
    </location>
</feature>
<feature type="compositionally biased region" description="Low complexity" evidence="4">
    <location>
        <begin position="9"/>
        <end position="20"/>
    </location>
</feature>
<feature type="compositionally biased region" description="Low complexity" evidence="4">
    <location>
        <begin position="74"/>
        <end position="85"/>
    </location>
</feature>
<feature type="sequence conflict" description="In Ref. 5; EEE66848." evidence="12" ref="5">
    <original>RWESH</original>
    <variation>QWESQ</variation>
    <location>
        <begin position="134"/>
        <end position="138"/>
    </location>
</feature>
<evidence type="ECO:0000250" key="1">
    <source>
        <dbReference type="UniProtKB" id="P47927"/>
    </source>
</evidence>
<evidence type="ECO:0000255" key="2"/>
<evidence type="ECO:0000255" key="3">
    <source>
        <dbReference type="PROSITE-ProRule" id="PRU00366"/>
    </source>
</evidence>
<evidence type="ECO:0000256" key="4">
    <source>
        <dbReference type="SAM" id="MobiDB-lite"/>
    </source>
</evidence>
<evidence type="ECO:0000269" key="5">
    <source>
    </source>
</evidence>
<evidence type="ECO:0000269" key="6">
    <source>
    </source>
</evidence>
<evidence type="ECO:0000269" key="7">
    <source>
    </source>
</evidence>
<evidence type="ECO:0000269" key="8">
    <source>
    </source>
</evidence>
<evidence type="ECO:0000269" key="9">
    <source>
    </source>
</evidence>
<evidence type="ECO:0000303" key="10">
    <source>
    </source>
</evidence>
<evidence type="ECO:0000303" key="11">
    <source>
    </source>
</evidence>
<evidence type="ECO:0000305" key="12"/>
<evidence type="ECO:0000305" key="13">
    <source>
    </source>
</evidence>
<evidence type="ECO:0000305" key="14">
    <source>
    </source>
</evidence>
<evidence type="ECO:0000312" key="15">
    <source>
        <dbReference type="EMBL" id="BAC21448.1"/>
    </source>
</evidence>
<evidence type="ECO:0000312" key="16">
    <source>
        <dbReference type="EMBL" id="BAF21158.1"/>
    </source>
</evidence>
<evidence type="ECO:0000312" key="17">
    <source>
        <dbReference type="EMBL" id="BAT00742.1"/>
    </source>
</evidence>
<evidence type="ECO:0000312" key="18">
    <source>
        <dbReference type="EMBL" id="EEE66848.1"/>
    </source>
</evidence>
<dbReference type="EMBL" id="DQ374663">
    <property type="protein sequence ID" value="ABD24033.1"/>
    <property type="molecule type" value="mRNA"/>
</dbReference>
<dbReference type="EMBL" id="AP004303">
    <property type="protein sequence ID" value="BAC21448.1"/>
    <property type="molecule type" value="Genomic_DNA"/>
</dbReference>
<dbReference type="EMBL" id="AP008213">
    <property type="protein sequence ID" value="BAF21158.1"/>
    <property type="molecule type" value="Genomic_DNA"/>
</dbReference>
<dbReference type="EMBL" id="AP014963">
    <property type="protein sequence ID" value="BAT00742.1"/>
    <property type="status" value="ALT_INIT"/>
    <property type="molecule type" value="Genomic_DNA"/>
</dbReference>
<dbReference type="EMBL" id="CM000144">
    <property type="protein sequence ID" value="EEE66848.1"/>
    <property type="molecule type" value="Genomic_DNA"/>
</dbReference>
<dbReference type="SMR" id="Q8H443"/>
<dbReference type="FunCoup" id="Q8H443">
    <property type="interactions" value="1"/>
</dbReference>
<dbReference type="STRING" id="39947.Q8H443"/>
<dbReference type="PaxDb" id="39947-Q8H443"/>
<dbReference type="EnsemblPlants" id="Os07t0235800-01">
    <property type="protein sequence ID" value="Os07t0235800-01"/>
    <property type="gene ID" value="Os07g0235800"/>
</dbReference>
<dbReference type="GeneID" id="4342787"/>
<dbReference type="Gramene" id="Os07t0235800-01">
    <property type="protein sequence ID" value="Os07t0235800-01"/>
    <property type="gene ID" value="Os07g0235800"/>
</dbReference>
<dbReference type="KEGG" id="dosa:Os07g0235800"/>
<dbReference type="KEGG" id="osa:4342787"/>
<dbReference type="eggNOG" id="ENOG502QSBE">
    <property type="taxonomic scope" value="Eukaryota"/>
</dbReference>
<dbReference type="HOGENOM" id="CLU_035462_0_0_1"/>
<dbReference type="InParanoid" id="Q8H443"/>
<dbReference type="OrthoDB" id="207175at2759"/>
<dbReference type="PlantReactome" id="R-OSA-9608575">
    <property type="pathway name" value="Reproductive meristem phase change"/>
</dbReference>
<dbReference type="Proteomes" id="UP000000763">
    <property type="component" value="Chromosome 7"/>
</dbReference>
<dbReference type="Proteomes" id="UP000007752">
    <property type="component" value="Chromosome 7"/>
</dbReference>
<dbReference type="Proteomes" id="UP000059680">
    <property type="component" value="Chromosome 7"/>
</dbReference>
<dbReference type="GO" id="GO:0005634">
    <property type="term" value="C:nucleus"/>
    <property type="evidence" value="ECO:0000314"/>
    <property type="project" value="UniProtKB"/>
</dbReference>
<dbReference type="GO" id="GO:0003677">
    <property type="term" value="F:DNA binding"/>
    <property type="evidence" value="ECO:0007669"/>
    <property type="project" value="UniProtKB-KW"/>
</dbReference>
<dbReference type="GO" id="GO:0003700">
    <property type="term" value="F:DNA-binding transcription factor activity"/>
    <property type="evidence" value="ECO:0007669"/>
    <property type="project" value="InterPro"/>
</dbReference>
<dbReference type="GO" id="GO:0006355">
    <property type="term" value="P:regulation of DNA-templated transcription"/>
    <property type="evidence" value="ECO:0000315"/>
    <property type="project" value="UniProtKB"/>
</dbReference>
<dbReference type="GO" id="GO:0009909">
    <property type="term" value="P:regulation of flower development"/>
    <property type="evidence" value="ECO:0000315"/>
    <property type="project" value="UniProtKB"/>
</dbReference>
<dbReference type="GO" id="GO:0010228">
    <property type="term" value="P:vegetative to reproductive phase transition of meristem"/>
    <property type="evidence" value="ECO:0000315"/>
    <property type="project" value="UniProtKB"/>
</dbReference>
<dbReference type="CDD" id="cd00018">
    <property type="entry name" value="AP2"/>
    <property type="match status" value="2"/>
</dbReference>
<dbReference type="FunFam" id="3.30.730.10:FF:000002">
    <property type="entry name" value="AP2-like ethylene-responsive transcription factor"/>
    <property type="match status" value="1"/>
</dbReference>
<dbReference type="FunFam" id="3.30.730.10:FF:000004">
    <property type="entry name" value="AP2-like ethylene-responsive transcription factor"/>
    <property type="match status" value="1"/>
</dbReference>
<dbReference type="Gene3D" id="3.30.730.10">
    <property type="entry name" value="AP2/ERF domain"/>
    <property type="match status" value="2"/>
</dbReference>
<dbReference type="InterPro" id="IPR001471">
    <property type="entry name" value="AP2/ERF_dom"/>
</dbReference>
<dbReference type="InterPro" id="IPR036955">
    <property type="entry name" value="AP2/ERF_dom_sf"/>
</dbReference>
<dbReference type="InterPro" id="IPR016177">
    <property type="entry name" value="DNA-bd_dom_sf"/>
</dbReference>
<dbReference type="PANTHER" id="PTHR32467">
    <property type="entry name" value="AP2-LIKE ETHYLENE-RESPONSIVE TRANSCRIPTION FACTOR"/>
    <property type="match status" value="1"/>
</dbReference>
<dbReference type="PANTHER" id="PTHR32467:SF152">
    <property type="entry name" value="APETALA2-LIKE PROTEIN 3"/>
    <property type="match status" value="1"/>
</dbReference>
<dbReference type="Pfam" id="PF00847">
    <property type="entry name" value="AP2"/>
    <property type="match status" value="2"/>
</dbReference>
<dbReference type="PRINTS" id="PR00367">
    <property type="entry name" value="ETHRSPELEMNT"/>
</dbReference>
<dbReference type="SMART" id="SM00380">
    <property type="entry name" value="AP2"/>
    <property type="match status" value="2"/>
</dbReference>
<dbReference type="SUPFAM" id="SSF54171">
    <property type="entry name" value="DNA-binding domain"/>
    <property type="match status" value="2"/>
</dbReference>
<dbReference type="PROSITE" id="PS51032">
    <property type="entry name" value="AP2_ERF"/>
    <property type="match status" value="2"/>
</dbReference>
<sequence length="436" mass="47439">MVLDLNVESPGGSAATSSSSTPPPPPDGGGGGYFRFDLLGGSPDEDGCSSPVMTRQLFPSPSAVVALAGDGSSTPPLTMPMPAAAGEGPWPRRAADLGVAQSQRSPAGGKKSRRGPRSRSSQYRGVTFYRRTGRWESHIWDCGKQVYLGGFDTAHAAARAYDRAAIKFRGLDADINFNLNDYEDDLKQMRNWTKEEFVHILRRQSTGFARGSSKYRGVTLHKCGRWEARMGQLLGKKYIYLGLFDSEIEAARAYDRAAIRFNGREAVTNFDPSSYDGDVLPETDNEVVDGDIIDLNLRISQPNVHELKSDGTLTGFQLNCDSPEASSSVVTQPISPQWPVLPQGTSMSQHPHLYASPCPGFFVNLREVPMEKRPELGPQSFPTSWSWQMQGSPLPLLPTAASSGFSTGTVADAARSPSSRPHPFPGHHQFYFPPTA</sequence>
<proteinExistence type="evidence at protein level"/>